<reference key="1">
    <citation type="journal article" date="1996" name="J. Dairy Sci.">
        <title>Purification of the bovine xanthine oxidoreductase from milk fat globule membranes and cloning of complementary deoxyribonucleic acid.</title>
        <authorList>
            <person name="Berglund L."/>
            <person name="Rasmussen J.T."/>
            <person name="Andersen M.D."/>
            <person name="Rasmussen M.S."/>
            <person name="Petersen T.E."/>
        </authorList>
    </citation>
    <scope>NUCLEOTIDE SEQUENCE [MRNA]</scope>
    <source>
        <tissue>Mammary gland</tissue>
    </source>
</reference>
<reference key="2">
    <citation type="journal article" date="1997" name="Biochem. Soc. Trans.">
        <title>The xanthine oxidoreductase gene: structure and regulation.</title>
        <authorList>
            <person name="Terao M."/>
            <person name="Kurosaki M."/>
            <person name="Zanotta S."/>
            <person name="Garattini E."/>
        </authorList>
    </citation>
    <scope>NUCLEOTIDE SEQUENCE [MRNA]</scope>
    <source>
        <tissue>Liver</tissue>
    </source>
</reference>
<reference key="3">
    <citation type="journal article" date="1995" name="Eur. J. Biochem.">
        <title>Properties of rabbit liver aldehyde oxidase and the relationship of the enzyme to xanthine oxidase and dehydrogenase.</title>
        <authorList>
            <person name="Turner N.A."/>
            <person name="Doyle W.A."/>
            <person name="Ventom A.M."/>
            <person name="Bray R.C."/>
        </authorList>
    </citation>
    <scope>PROTEIN SEQUENCE OF 2-23; 186-205 AND 552-562</scope>
    <source>
        <tissue>Milk</tissue>
    </source>
</reference>
<reference key="4">
    <citation type="journal article" date="1973" name="Biochem. J.">
        <title>Milk xanthine oxidase type D (dehydrogenase) and type O (oxidase). Purification, interconversion and some properties.</title>
        <authorList>
            <person name="Battelli M.G."/>
            <person name="Lorenzoni E."/>
            <person name="Stripe F."/>
        </authorList>
    </citation>
    <scope>CATALYTIC ACTIVITY</scope>
    <scope>ACTIVITY REGULATION</scope>
    <scope>BIOPHYSICOCHEMICAL PROPERTIES</scope>
    <scope>CONVERSION BY PARTIAL PROTEOLYSIS AND BY REDUCING AGENTS</scope>
</reference>
<reference key="5">
    <citation type="journal article" date="2003" name="Proc. Natl. Acad. Sci. U.S.A.">
        <title>Unique amino acids cluster for switching from the dehydrogenase to oxidase form of xanthine oxidoreductase.</title>
        <authorList>
            <person name="Kuwabara Y."/>
            <person name="Nishino T."/>
            <person name="Okamoto K."/>
            <person name="Matsumura T."/>
            <person name="Eger B.T."/>
            <person name="Pai E.F."/>
            <person name="Nishino T."/>
        </authorList>
    </citation>
    <scope>ACTIVITY REGULATION</scope>
    <scope>BIOPHYSICOCHEMICAL PROPERTIES</scope>
    <scope>MUTAGENESIS OF ARG-335; TRP-336 AND ARG-427</scope>
</reference>
<reference key="6">
    <citation type="journal article" date="2000" name="Proc. Natl. Acad. Sci. U.S.A.">
        <title>Crystal structures of bovine milk xanthine dehydrogenase and xanthine oxidase: structure-based mechanism of conversion.</title>
        <authorList>
            <person name="Enroth C."/>
            <person name="Eger B.T."/>
            <person name="Okamoto K."/>
            <person name="Nishino T."/>
            <person name="Nishino T."/>
            <person name="Pai E.F."/>
        </authorList>
    </citation>
    <scope>X-RAY CRYSTALLOGRAPHY (2.1 ANGSTROMS) IN COMPLEXES WITH FAD; IRON-SULFUR CENTERS; SALICYLATE</scope>
    <scope>SUBUNIT</scope>
    <scope>COFACTOR</scope>
    <scope>CATALYTIC ACTIVITY</scope>
    <scope>ACTIVITY REGULATION</scope>
    <scope>SUBCELLULAR LOCATION</scope>
    <scope>TISSUE SPECIFICITY</scope>
</reference>
<reference key="7">
    <citation type="journal article" date="2003" name="J. Biol. Chem.">
        <title>An extremely potent inhibitor of xanthine oxidoreductase. Crystal structure of the enzyme-inhibitor complex and mechanism of inhibition.</title>
        <authorList>
            <person name="Okamoto K."/>
            <person name="Eger B.T."/>
            <person name="Nishino T."/>
            <person name="Kondo S."/>
            <person name="Pai E.F."/>
            <person name="Nishino T."/>
        </authorList>
    </citation>
    <scope>X-RAY CRYSTALLOGRAPHY (2.8 ANGSTROMS) IN COMPLEX WITH FAD; MOLYBDOPTERIN; IRON-SULFUR CENTERS AND SYNTHETIC INHIBITOR TEI-6720</scope>
    <scope>COFACTOR</scope>
    <scope>CATALYTIC ACTIVITY</scope>
    <scope>TISSUE SPECIFICITY</scope>
    <scope>SUBCELLULAR LOCATION</scope>
</reference>
<reference key="8">
    <citation type="journal article" date="2004" name="Proc. Natl. Acad. Sci. U.S.A.">
        <title>The crystal structure of xanthine oxidoreductase during catalysis: implications for reaction mechanism and enzyme inhibition.</title>
        <authorList>
            <person name="Okamoto K."/>
            <person name="Matsumoto K."/>
            <person name="Hille R."/>
            <person name="Eger B.T."/>
            <person name="Pai E.F."/>
            <person name="Nishino T."/>
        </authorList>
    </citation>
    <scope>X-RAY CRYSTALLOGRAPHY (1.94 ANGSTROMS) IN COMPLEX WITH FAD; MOLYBDOPTERIN; IRON-SULFUR CENTERS AND INHIBITOR FYX-051</scope>
    <scope>ACTIVE SITE</scope>
    <scope>COFACTOR</scope>
    <scope>CATALYTIC ACTIVITY</scope>
    <scope>TISSUE SPECIFICITY</scope>
    <scope>SUBCELLULAR LOCATION</scope>
</reference>
<reference key="9">
    <citation type="journal article" date="2009" name="J. Biol. Chem.">
        <title>Substrate orientation and catalysis at the molybdenum site in xanthine oxidase: crystal structures in complex with xanthine and lumazine.</title>
        <authorList>
            <person name="Pauff J.M."/>
            <person name="Cao H."/>
            <person name="Hille R."/>
        </authorList>
    </citation>
    <scope>X-RAY CRYSTALLOGRAPHY (2.2 ANGSTROMS) IN COMPLEXES WITH FAD; MOLYBDOPTERIN; IRON-SULFUR CENTERS; CALCIUM IONS; XANTHINE AND LUMAZINE</scope>
    <scope>COFACTOR</scope>
    <scope>SUBUNIT</scope>
</reference>
<feature type="initiator methionine" description="Removed" evidence="11">
    <location>
        <position position="1"/>
    </location>
</feature>
<feature type="chain" id="PRO_0000166082" description="Xanthine dehydrogenase/oxidase">
    <location>
        <begin position="2"/>
        <end position="1332"/>
    </location>
</feature>
<feature type="domain" description="2Fe-2S ferredoxin-type" evidence="3">
    <location>
        <begin position="4"/>
        <end position="91"/>
    </location>
</feature>
<feature type="domain" description="FAD-binding PCMH-type" evidence="4">
    <location>
        <begin position="229"/>
        <end position="414"/>
    </location>
</feature>
<feature type="active site" description="Proton acceptor" evidence="8">
    <location>
        <position position="1261"/>
    </location>
</feature>
<feature type="binding site" evidence="6 8 9">
    <location>
        <position position="43"/>
    </location>
    <ligand>
        <name>[2Fe-2S] cluster</name>
        <dbReference type="ChEBI" id="CHEBI:190135"/>
        <label>1</label>
    </ligand>
</feature>
<feature type="binding site" evidence="6 8 9">
    <location>
        <position position="48"/>
    </location>
    <ligand>
        <name>[2Fe-2S] cluster</name>
        <dbReference type="ChEBI" id="CHEBI:190135"/>
        <label>1</label>
    </ligand>
</feature>
<feature type="binding site" evidence="6 8 9">
    <location>
        <position position="51"/>
    </location>
    <ligand>
        <name>[2Fe-2S] cluster</name>
        <dbReference type="ChEBI" id="CHEBI:190135"/>
        <label>1</label>
    </ligand>
</feature>
<feature type="binding site" evidence="6 8 9">
    <location>
        <position position="73"/>
    </location>
    <ligand>
        <name>[2Fe-2S] cluster</name>
        <dbReference type="ChEBI" id="CHEBI:190135"/>
        <label>1</label>
    </ligand>
</feature>
<feature type="binding site" evidence="6 8 9">
    <location>
        <position position="113"/>
    </location>
    <ligand>
        <name>[2Fe-2S] cluster</name>
        <dbReference type="ChEBI" id="CHEBI:190135"/>
        <label>2</label>
    </ligand>
</feature>
<feature type="binding site" evidence="6 8 9">
    <location>
        <position position="116"/>
    </location>
    <ligand>
        <name>[2Fe-2S] cluster</name>
        <dbReference type="ChEBI" id="CHEBI:190135"/>
        <label>2</label>
    </ligand>
</feature>
<feature type="binding site" evidence="6 8 9">
    <location>
        <position position="148"/>
    </location>
    <ligand>
        <name>[2Fe-2S] cluster</name>
        <dbReference type="ChEBI" id="CHEBI:190135"/>
        <label>2</label>
    </ligand>
</feature>
<feature type="binding site" evidence="6 8 9">
    <location>
        <position position="150"/>
    </location>
    <ligand>
        <name>[2Fe-2S] cluster</name>
        <dbReference type="ChEBI" id="CHEBI:190135"/>
        <label>2</label>
    </ligand>
</feature>
<feature type="binding site" evidence="6 8">
    <location>
        <begin position="257"/>
        <end position="264"/>
    </location>
    <ligand>
        <name>FAD</name>
        <dbReference type="ChEBI" id="CHEBI:57692"/>
    </ligand>
</feature>
<feature type="binding site" evidence="6 8">
    <location>
        <position position="337"/>
    </location>
    <ligand>
        <name>FAD</name>
        <dbReference type="ChEBI" id="CHEBI:57692"/>
    </ligand>
</feature>
<feature type="binding site" evidence="6 8">
    <location>
        <begin position="347"/>
        <end position="351"/>
    </location>
    <ligand>
        <name>FAD</name>
        <dbReference type="ChEBI" id="CHEBI:57692"/>
    </ligand>
</feature>
<feature type="binding site" evidence="6 8">
    <location>
        <position position="360"/>
    </location>
    <ligand>
        <name>FAD</name>
        <dbReference type="ChEBI" id="CHEBI:57692"/>
    </ligand>
</feature>
<feature type="binding site" evidence="6 8">
    <location>
        <position position="404"/>
    </location>
    <ligand>
        <name>FAD</name>
        <dbReference type="ChEBI" id="CHEBI:57692"/>
    </ligand>
</feature>
<feature type="binding site" evidence="6 8">
    <location>
        <position position="422"/>
    </location>
    <ligand>
        <name>FAD</name>
        <dbReference type="ChEBI" id="CHEBI:57692"/>
    </ligand>
</feature>
<feature type="binding site" evidence="6 8 9">
    <location>
        <position position="767"/>
    </location>
    <ligand>
        <name>Mo-molybdopterin</name>
        <dbReference type="ChEBI" id="CHEBI:71302"/>
    </ligand>
    <ligandPart>
        <name>Mo</name>
        <dbReference type="ChEBI" id="CHEBI:28685"/>
    </ligandPart>
</feature>
<feature type="binding site" evidence="6 8 9">
    <location>
        <position position="798"/>
    </location>
    <ligand>
        <name>Mo-molybdopterin</name>
        <dbReference type="ChEBI" id="CHEBI:71302"/>
    </ligand>
    <ligandPart>
        <name>Mo</name>
        <dbReference type="ChEBI" id="CHEBI:28685"/>
    </ligandPart>
</feature>
<feature type="binding site">
    <location>
        <position position="802"/>
    </location>
    <ligand>
        <name>substrate</name>
    </ligand>
</feature>
<feature type="binding site">
    <location>
        <position position="880"/>
    </location>
    <ligand>
        <name>substrate</name>
    </ligand>
</feature>
<feature type="binding site" evidence="6 8 9">
    <location>
        <position position="912"/>
    </location>
    <ligand>
        <name>Mo-molybdopterin</name>
        <dbReference type="ChEBI" id="CHEBI:71302"/>
    </ligand>
    <ligandPart>
        <name>Mo</name>
        <dbReference type="ChEBI" id="CHEBI:28685"/>
    </ligandPart>
</feature>
<feature type="binding site">
    <location>
        <position position="914"/>
    </location>
    <ligand>
        <name>substrate</name>
    </ligand>
</feature>
<feature type="binding site">
    <location>
        <position position="1010"/>
    </location>
    <ligand>
        <name>substrate</name>
    </ligand>
</feature>
<feature type="binding site" evidence="6 8 9">
    <location>
        <position position="1079"/>
    </location>
    <ligand>
        <name>Mo-molybdopterin</name>
        <dbReference type="ChEBI" id="CHEBI:71302"/>
    </ligand>
    <ligandPart>
        <name>Mo</name>
        <dbReference type="ChEBI" id="CHEBI:28685"/>
    </ligandPart>
</feature>
<feature type="disulfide bond" description="In oxidase form" evidence="1">
    <location>
        <begin position="535"/>
        <end position="992"/>
    </location>
</feature>
<feature type="mutagenesis site" description="Promotes conversion to the oxidase form that utilizes molecular oxygen as electron acceptor. Interferes with normal conversion to the dehydrogenase form by reducing agents." evidence="7">
    <original>R</original>
    <variation>A</variation>
    <location>
        <position position="335"/>
    </location>
</feature>
<feature type="mutagenesis site" description="Promotes conversion to the oxidase form that utilizes molecular oxygen as electron acceptor. Interferes with normal conversion to the dehydrogenase form by reducing agents." evidence="7">
    <original>W</original>
    <variation>A</variation>
    <location>
        <position position="336"/>
    </location>
</feature>
<feature type="mutagenesis site" description="Promotes conversion to the oxidase form that utilizes molecular oxygen as electron acceptor. Interferes with normal conversion to the dehydrogenase form by reducing agents." evidence="7">
    <original>R</original>
    <variation>Q</variation>
    <location>
        <position position="427"/>
    </location>
</feature>
<feature type="sequence conflict" description="In Ref. 2; CAA67117." evidence="12" ref="2">
    <original>T</original>
    <variation>TQ</variation>
    <location>
        <position position="188"/>
    </location>
</feature>
<feature type="sequence conflict" description="In Ref. 2; CAA67117." evidence="12" ref="2">
    <original>E</original>
    <variation>K</variation>
    <location>
        <position position="199"/>
    </location>
</feature>
<feature type="sequence conflict" description="In Ref. 2; CAA67117." evidence="12" ref="2">
    <original>M</original>
    <variation>V</variation>
    <location>
        <position position="366"/>
    </location>
</feature>
<feature type="sequence conflict" description="In Ref. 1; CAA58497." evidence="12" ref="1">
    <original>D</original>
    <variation>H</variation>
    <location>
        <position position="552"/>
    </location>
</feature>
<feature type="sequence conflict" description="In Ref. 2; CAA67117." evidence="12" ref="2">
    <original>R</original>
    <variation>K</variation>
    <location>
        <position position="958"/>
    </location>
</feature>
<feature type="sequence conflict" description="In Ref. 2; CAA67117." evidence="12" ref="2">
    <original>Q</original>
    <variation>E</variation>
    <location>
        <position position="976"/>
    </location>
</feature>
<feature type="sequence conflict" description="In Ref. 2; CAA67117." evidence="12" ref="2">
    <original>GQ</original>
    <variation>E</variation>
    <location>
        <begin position="1039"/>
        <end position="1040"/>
    </location>
</feature>
<feature type="sequence conflict" description="In Ref. 2; CAA67117." evidence="12" ref="2">
    <original>L</original>
    <variation>V</variation>
    <location>
        <position position="1244"/>
    </location>
</feature>
<feature type="sequence conflict" description="In Ref. 2; CAA67117." evidence="12" ref="2">
    <original>A</original>
    <variation>P</variation>
    <location>
        <position position="1268"/>
    </location>
</feature>
<feature type="sequence conflict" description="In Ref. 2; CAA67117." evidence="12" ref="2">
    <original>RAA</original>
    <variation>ARG</variation>
    <location>
        <begin position="1279"/>
        <end position="1281"/>
    </location>
</feature>
<feature type="strand" evidence="17">
    <location>
        <begin position="6"/>
        <end position="10"/>
    </location>
</feature>
<feature type="strand" evidence="17">
    <location>
        <begin position="13"/>
        <end position="17"/>
    </location>
</feature>
<feature type="helix" evidence="17">
    <location>
        <begin position="26"/>
        <end position="32"/>
    </location>
</feature>
<feature type="strand" evidence="17">
    <location>
        <begin position="44"/>
        <end position="48"/>
    </location>
</feature>
<feature type="strand" evidence="17">
    <location>
        <begin position="52"/>
        <end position="59"/>
    </location>
</feature>
<feature type="turn" evidence="17">
    <location>
        <begin position="60"/>
        <end position="63"/>
    </location>
</feature>
<feature type="strand" evidence="17">
    <location>
        <begin position="64"/>
        <end position="71"/>
    </location>
</feature>
<feature type="turn" evidence="17">
    <location>
        <begin position="72"/>
        <end position="74"/>
    </location>
</feature>
<feature type="helix" evidence="17">
    <location>
        <begin position="77"/>
        <end position="79"/>
    </location>
</feature>
<feature type="strand" evidence="17">
    <location>
        <begin position="84"/>
        <end position="86"/>
    </location>
</feature>
<feature type="helix" evidence="17">
    <location>
        <begin position="88"/>
        <end position="90"/>
    </location>
</feature>
<feature type="strand" evidence="14">
    <location>
        <begin position="94"/>
        <end position="96"/>
    </location>
</feature>
<feature type="helix" evidence="17">
    <location>
        <begin position="100"/>
        <end position="107"/>
    </location>
</feature>
<feature type="helix" evidence="17">
    <location>
        <begin position="117"/>
        <end position="130"/>
    </location>
</feature>
<feature type="helix" evidence="17">
    <location>
        <begin position="136"/>
        <end position="140"/>
    </location>
</feature>
<feature type="turn" evidence="18">
    <location>
        <begin position="142"/>
        <end position="145"/>
    </location>
</feature>
<feature type="strand" evidence="17">
    <location>
        <begin position="149"/>
        <end position="151"/>
    </location>
</feature>
<feature type="helix" evidence="17">
    <location>
        <begin position="154"/>
        <end position="161"/>
    </location>
</feature>
<feature type="helix" evidence="17">
    <location>
        <begin position="198"/>
        <end position="200"/>
    </location>
</feature>
<feature type="helix" evidence="20">
    <location>
        <begin position="206"/>
        <end position="208"/>
    </location>
</feature>
<feature type="helix" evidence="17">
    <location>
        <begin position="214"/>
        <end position="218"/>
    </location>
</feature>
<feature type="helix" evidence="13">
    <location>
        <begin position="219"/>
        <end position="221"/>
    </location>
</feature>
<feature type="strand" evidence="17">
    <location>
        <begin position="227"/>
        <end position="230"/>
    </location>
</feature>
<feature type="strand" evidence="17">
    <location>
        <begin position="235"/>
        <end position="238"/>
    </location>
</feature>
<feature type="helix" evidence="17">
    <location>
        <begin position="242"/>
        <end position="251"/>
    </location>
</feature>
<feature type="helix" evidence="17">
    <location>
        <begin position="264"/>
        <end position="270"/>
    </location>
</feature>
<feature type="strand" evidence="17">
    <location>
        <begin position="276"/>
        <end position="280"/>
    </location>
</feature>
<feature type="helix" evidence="17">
    <location>
        <begin position="285"/>
        <end position="287"/>
    </location>
</feature>
<feature type="strand" evidence="17">
    <location>
        <begin position="290"/>
        <end position="292"/>
    </location>
</feature>
<feature type="strand" evidence="17">
    <location>
        <begin position="294"/>
        <end position="300"/>
    </location>
</feature>
<feature type="helix" evidence="17">
    <location>
        <begin position="305"/>
        <end position="318"/>
    </location>
</feature>
<feature type="helix" evidence="17">
    <location>
        <begin position="321"/>
        <end position="323"/>
    </location>
</feature>
<feature type="helix" evidence="17">
    <location>
        <begin position="325"/>
        <end position="334"/>
    </location>
</feature>
<feature type="strand" evidence="16">
    <location>
        <begin position="336"/>
        <end position="338"/>
    </location>
</feature>
<feature type="helix" evidence="17">
    <location>
        <begin position="340"/>
        <end position="343"/>
    </location>
</feature>
<feature type="helix" evidence="17">
    <location>
        <begin position="348"/>
        <end position="354"/>
    </location>
</feature>
<feature type="helix" evidence="17">
    <location>
        <begin position="362"/>
        <end position="367"/>
    </location>
</feature>
<feature type="strand" evidence="17">
    <location>
        <begin position="371"/>
        <end position="376"/>
    </location>
</feature>
<feature type="strand" evidence="17">
    <location>
        <begin position="379"/>
        <end position="384"/>
    </location>
</feature>
<feature type="helix" evidence="17">
    <location>
        <begin position="387"/>
        <end position="389"/>
    </location>
</feature>
<feature type="strand" evidence="17">
    <location>
        <begin position="403"/>
        <end position="410"/>
    </location>
</feature>
<feature type="strand" evidence="17">
    <location>
        <begin position="416"/>
        <end position="422"/>
    </location>
</feature>
<feature type="strand" evidence="17">
    <location>
        <begin position="428"/>
        <end position="431"/>
    </location>
</feature>
<feature type="strand" evidence="17">
    <location>
        <begin position="435"/>
        <end position="443"/>
    </location>
</feature>
<feature type="strand" evidence="17">
    <location>
        <begin position="446"/>
        <end position="462"/>
    </location>
</feature>
<feature type="helix" evidence="17">
    <location>
        <begin position="467"/>
        <end position="471"/>
    </location>
</feature>
<feature type="turn" evidence="17">
    <location>
        <begin position="472"/>
        <end position="475"/>
    </location>
</feature>
<feature type="strand" evidence="17">
    <location>
        <begin position="477"/>
        <end position="479"/>
    </location>
</feature>
<feature type="helix" evidence="17">
    <location>
        <begin position="480"/>
        <end position="493"/>
    </location>
</feature>
<feature type="helix" evidence="17">
    <location>
        <begin position="505"/>
        <end position="527"/>
    </location>
</feature>
<feature type="turn" evidence="20">
    <location>
        <begin position="540"/>
        <end position="542"/>
    </location>
</feature>
<feature type="helix" evidence="20">
    <location>
        <begin position="543"/>
        <end position="546"/>
    </location>
</feature>
<feature type="strand" evidence="20">
    <location>
        <begin position="555"/>
        <end position="559"/>
    </location>
</feature>
<feature type="helix" evidence="17">
    <location>
        <begin position="582"/>
        <end position="586"/>
    </location>
</feature>
<feature type="helix" evidence="17">
    <location>
        <begin position="593"/>
        <end position="595"/>
    </location>
</feature>
<feature type="strand" evidence="17">
    <location>
        <begin position="603"/>
        <end position="609"/>
    </location>
</feature>
<feature type="strand" evidence="17">
    <location>
        <begin position="611"/>
        <end position="621"/>
    </location>
</feature>
<feature type="helix" evidence="17">
    <location>
        <begin position="625"/>
        <end position="627"/>
    </location>
</feature>
<feature type="strand" evidence="17">
    <location>
        <begin position="631"/>
        <end position="635"/>
    </location>
</feature>
<feature type="helix" evidence="17">
    <location>
        <begin position="637"/>
        <end position="639"/>
    </location>
</feature>
<feature type="strand" evidence="17">
    <location>
        <begin position="644"/>
        <end position="647"/>
    </location>
</feature>
<feature type="strand" evidence="17">
    <location>
        <begin position="652"/>
        <end position="655"/>
    </location>
</feature>
<feature type="strand" evidence="17">
    <location>
        <begin position="658"/>
        <end position="660"/>
    </location>
</feature>
<feature type="strand" evidence="17">
    <location>
        <begin position="666"/>
        <end position="674"/>
    </location>
</feature>
<feature type="helix" evidence="17">
    <location>
        <begin position="675"/>
        <end position="683"/>
    </location>
</feature>
<feature type="strand" evidence="17">
    <location>
        <begin position="686"/>
        <end position="691"/>
    </location>
</feature>
<feature type="helix" evidence="17">
    <location>
        <begin position="698"/>
        <end position="703"/>
    </location>
</feature>
<feature type="strand" evidence="17">
    <location>
        <begin position="707"/>
        <end position="717"/>
    </location>
</feature>
<feature type="helix" evidence="17">
    <location>
        <begin position="719"/>
        <end position="725"/>
    </location>
</feature>
<feature type="strand" evidence="17">
    <location>
        <begin position="727"/>
        <end position="736"/>
    </location>
</feature>
<feature type="strand" evidence="17">
    <location>
        <begin position="748"/>
        <end position="753"/>
    </location>
</feature>
<feature type="strand" evidence="17">
    <location>
        <begin position="760"/>
        <end position="764"/>
    </location>
</feature>
<feature type="helix" evidence="17">
    <location>
        <begin position="769"/>
        <end position="780"/>
    </location>
</feature>
<feature type="helix" evidence="17">
    <location>
        <begin position="784"/>
        <end position="786"/>
    </location>
</feature>
<feature type="strand" evidence="17">
    <location>
        <begin position="787"/>
        <end position="791"/>
    </location>
</feature>
<feature type="turn" evidence="17">
    <location>
        <begin position="798"/>
        <end position="801"/>
    </location>
</feature>
<feature type="helix" evidence="17">
    <location>
        <begin position="806"/>
        <end position="819"/>
    </location>
</feature>
<feature type="strand" evidence="17">
    <location>
        <begin position="823"/>
        <end position="826"/>
    </location>
</feature>
<feature type="helix" evidence="17">
    <location>
        <begin position="829"/>
        <end position="835"/>
    </location>
</feature>
<feature type="strand" evidence="17">
    <location>
        <begin position="842"/>
        <end position="850"/>
    </location>
</feature>
<feature type="strand" evidence="17">
    <location>
        <begin position="856"/>
        <end position="866"/>
    </location>
</feature>
<feature type="helix" evidence="17">
    <location>
        <begin position="874"/>
        <end position="883"/>
    </location>
</feature>
<feature type="turn" evidence="17">
    <location>
        <begin position="884"/>
        <end position="888"/>
    </location>
</feature>
<feature type="strand" evidence="17">
    <location>
        <begin position="892"/>
        <end position="901"/>
    </location>
</feature>
<feature type="turn" evidence="17">
    <location>
        <begin position="912"/>
        <end position="915"/>
    </location>
</feature>
<feature type="helix" evidence="17">
    <location>
        <begin position="916"/>
        <end position="934"/>
    </location>
</feature>
<feature type="helix" evidence="17">
    <location>
        <begin position="938"/>
        <end position="945"/>
    </location>
</feature>
<feature type="helix" evidence="17">
    <location>
        <begin position="964"/>
        <end position="974"/>
    </location>
</feature>
<feature type="helix" evidence="17">
    <location>
        <begin position="977"/>
        <end position="990"/>
    </location>
</feature>
<feature type="strand" evidence="17">
    <location>
        <begin position="992"/>
        <end position="1008"/>
    </location>
</feature>
<feature type="helix" evidence="17">
    <location>
        <begin position="1012"/>
        <end position="1014"/>
    </location>
</feature>
<feature type="strand" evidence="17">
    <location>
        <begin position="1016"/>
        <end position="1023"/>
    </location>
</feature>
<feature type="strand" evidence="17">
    <location>
        <begin position="1029"/>
        <end position="1034"/>
    </location>
</feature>
<feature type="strand" evidence="17">
    <location>
        <begin position="1038"/>
        <end position="1040"/>
    </location>
</feature>
<feature type="helix" evidence="17">
    <location>
        <begin position="1042"/>
        <end position="1054"/>
    </location>
</feature>
<feature type="helix" evidence="17">
    <location>
        <begin position="1058"/>
        <end position="1060"/>
    </location>
</feature>
<feature type="strand" evidence="19">
    <location>
        <begin position="1061"/>
        <end position="1063"/>
    </location>
</feature>
<feature type="turn" evidence="17">
    <location>
        <begin position="1068"/>
        <end position="1070"/>
    </location>
</feature>
<feature type="turn" evidence="15">
    <location>
        <begin position="1079"/>
        <end position="1081"/>
    </location>
</feature>
<feature type="helix" evidence="17">
    <location>
        <begin position="1082"/>
        <end position="1107"/>
    </location>
</feature>
<feature type="helix" evidence="17">
    <location>
        <begin position="1113"/>
        <end position="1122"/>
    </location>
</feature>
<feature type="strand" evidence="17">
    <location>
        <begin position="1128"/>
        <end position="1134"/>
    </location>
</feature>
<feature type="turn" evidence="17">
    <location>
        <begin position="1142"/>
        <end position="1145"/>
    </location>
</feature>
<feature type="strand" evidence="17">
    <location>
        <begin position="1151"/>
        <end position="1165"/>
    </location>
</feature>
<feature type="turn" evidence="17">
    <location>
        <begin position="1166"/>
        <end position="1168"/>
    </location>
</feature>
<feature type="strand" evidence="17">
    <location>
        <begin position="1171"/>
        <end position="1181"/>
    </location>
</feature>
<feature type="helix" evidence="17">
    <location>
        <begin position="1188"/>
        <end position="1207"/>
    </location>
</feature>
<feature type="turn" evidence="17">
    <location>
        <begin position="1224"/>
        <end position="1226"/>
    </location>
</feature>
<feature type="helix" evidence="17">
    <location>
        <begin position="1232"/>
        <end position="1234"/>
    </location>
</feature>
<feature type="strand" evidence="17">
    <location>
        <begin position="1237"/>
        <end position="1243"/>
    </location>
</feature>
<feature type="helix" evidence="17">
    <location>
        <begin position="1253"/>
        <end position="1255"/>
    </location>
</feature>
<feature type="helix" evidence="17">
    <location>
        <begin position="1264"/>
        <end position="1267"/>
    </location>
</feature>
<feature type="helix" evidence="17">
    <location>
        <begin position="1268"/>
        <end position="1285"/>
    </location>
</feature>
<feature type="helix" evidence="17">
    <location>
        <begin position="1302"/>
        <end position="1308"/>
    </location>
</feature>
<feature type="turn" evidence="17">
    <location>
        <begin position="1312"/>
        <end position="1314"/>
    </location>
</feature>
<feature type="helix" evidence="17">
    <location>
        <begin position="1317"/>
        <end position="1319"/>
    </location>
</feature>
<dbReference type="EC" id="1.17.1.4" evidence="5 6 8 10"/>
<dbReference type="EC" id="1.17.3.2" evidence="5 6 8 10"/>
<dbReference type="EMBL" id="X83508">
    <property type="protein sequence ID" value="CAA58497.1"/>
    <property type="molecule type" value="mRNA"/>
</dbReference>
<dbReference type="EMBL" id="X98491">
    <property type="protein sequence ID" value="CAA67117.1"/>
    <property type="molecule type" value="mRNA"/>
</dbReference>
<dbReference type="PIR" id="S65135">
    <property type="entry name" value="S65135"/>
</dbReference>
<dbReference type="RefSeq" id="NP_776397.1">
    <property type="nucleotide sequence ID" value="NM_173972.2"/>
</dbReference>
<dbReference type="PDB" id="1FIQ">
    <property type="method" value="X-ray"/>
    <property type="resolution" value="2.50 A"/>
    <property type="chains" value="A=1-219, B=220-569, C=570-1332"/>
</dbReference>
<dbReference type="PDB" id="1FO4">
    <property type="method" value="X-ray"/>
    <property type="resolution" value="2.10 A"/>
    <property type="chains" value="A/B=1-1332"/>
</dbReference>
<dbReference type="PDB" id="1N5X">
    <property type="method" value="X-ray"/>
    <property type="resolution" value="2.80 A"/>
    <property type="chains" value="A/B=2-1332"/>
</dbReference>
<dbReference type="PDB" id="1V97">
    <property type="method" value="X-ray"/>
    <property type="resolution" value="1.94 A"/>
    <property type="chains" value="A/B=1-1332"/>
</dbReference>
<dbReference type="PDB" id="1VDV">
    <property type="method" value="X-ray"/>
    <property type="resolution" value="1.98 A"/>
    <property type="chains" value="A/B=1-1332"/>
</dbReference>
<dbReference type="PDB" id="3AM9">
    <property type="method" value="X-ray"/>
    <property type="resolution" value="2.17 A"/>
    <property type="chains" value="A/B=1-1332"/>
</dbReference>
<dbReference type="PDB" id="3AMZ">
    <property type="method" value="X-ray"/>
    <property type="resolution" value="2.10 A"/>
    <property type="chains" value="A/B=1-1332"/>
</dbReference>
<dbReference type="PDB" id="3AX7">
    <property type="method" value="X-ray"/>
    <property type="resolution" value="2.34 A"/>
    <property type="chains" value="A/B=1-1332"/>
</dbReference>
<dbReference type="PDB" id="3AX9">
    <property type="method" value="X-ray"/>
    <property type="resolution" value="2.30 A"/>
    <property type="chains" value="A/B=1-1332"/>
</dbReference>
<dbReference type="PDB" id="3B9J">
    <property type="method" value="X-ray"/>
    <property type="resolution" value="2.30 A"/>
    <property type="chains" value="A/I=1-219, B/J=220-569, C/K=570-1332"/>
</dbReference>
<dbReference type="PDB" id="3BDJ">
    <property type="method" value="X-ray"/>
    <property type="resolution" value="2.00 A"/>
    <property type="chains" value="A/B=1-1332"/>
</dbReference>
<dbReference type="PDB" id="3ETR">
    <property type="method" value="X-ray"/>
    <property type="resolution" value="2.20 A"/>
    <property type="chains" value="A/L=2-165, B/M=224-528, C/N=571-1325"/>
</dbReference>
<dbReference type="PDB" id="3EUB">
    <property type="method" value="X-ray"/>
    <property type="resolution" value="2.60 A"/>
    <property type="chains" value="2/A/J/S=1-165, 3/B/K/T=224-528, 4/C/L/U=571-1332"/>
</dbReference>
<dbReference type="PDB" id="3NRZ">
    <property type="method" value="X-ray"/>
    <property type="resolution" value="1.80 A"/>
    <property type="chains" value="A/J=2-165, B/K=224-528, C/L=571-1326"/>
</dbReference>
<dbReference type="PDB" id="3NS1">
    <property type="method" value="X-ray"/>
    <property type="resolution" value="2.60 A"/>
    <property type="chains" value="A/J=2-165, B/K=224-528, C/L=571-1325"/>
</dbReference>
<dbReference type="PDB" id="3NVV">
    <property type="method" value="X-ray"/>
    <property type="resolution" value="1.82 A"/>
    <property type="chains" value="A/J=2-165, B/K=195-528, C/L=571-1325"/>
</dbReference>
<dbReference type="PDB" id="3NVW">
    <property type="method" value="X-ray"/>
    <property type="resolution" value="1.60 A"/>
    <property type="chains" value="A/J=2-165, B/K=195-528, C/L=571-1326"/>
</dbReference>
<dbReference type="PDB" id="3NVY">
    <property type="method" value="X-ray"/>
    <property type="resolution" value="2.00 A"/>
    <property type="chains" value="A/J=2-165, B/K=195-528, C/L=571-1326"/>
</dbReference>
<dbReference type="PDB" id="3NVZ">
    <property type="method" value="X-ray"/>
    <property type="resolution" value="1.60 A"/>
    <property type="chains" value="A/J=2-165, B/K=224-528, C/L=571-1325"/>
</dbReference>
<dbReference type="PDB" id="3SR6">
    <property type="method" value="X-ray"/>
    <property type="resolution" value="2.10 A"/>
    <property type="chains" value="A/J=2-165, B/K=224-528, C/L=571-1315"/>
</dbReference>
<dbReference type="PDB" id="3UNA">
    <property type="method" value="X-ray"/>
    <property type="resolution" value="1.90 A"/>
    <property type="chains" value="A/B=1-1332"/>
</dbReference>
<dbReference type="PDB" id="3UNC">
    <property type="method" value="X-ray"/>
    <property type="resolution" value="1.65 A"/>
    <property type="chains" value="A/B=1-1332"/>
</dbReference>
<dbReference type="PDB" id="3UNI">
    <property type="method" value="X-ray"/>
    <property type="resolution" value="2.20 A"/>
    <property type="chains" value="A/B=1-1332"/>
</dbReference>
<dbReference type="PDB" id="8J79">
    <property type="method" value="X-ray"/>
    <property type="resolution" value="1.99 A"/>
    <property type="chains" value="A/B=1-1332"/>
</dbReference>
<dbReference type="PDBsum" id="1FIQ"/>
<dbReference type="PDBsum" id="1FO4"/>
<dbReference type="PDBsum" id="1N5X"/>
<dbReference type="PDBsum" id="1V97"/>
<dbReference type="PDBsum" id="1VDV"/>
<dbReference type="PDBsum" id="3AM9"/>
<dbReference type="PDBsum" id="3AMZ"/>
<dbReference type="PDBsum" id="3AX7"/>
<dbReference type="PDBsum" id="3AX9"/>
<dbReference type="PDBsum" id="3B9J"/>
<dbReference type="PDBsum" id="3BDJ"/>
<dbReference type="PDBsum" id="3ETR"/>
<dbReference type="PDBsum" id="3EUB"/>
<dbReference type="PDBsum" id="3NRZ"/>
<dbReference type="PDBsum" id="3NS1"/>
<dbReference type="PDBsum" id="3NVV"/>
<dbReference type="PDBsum" id="3NVW"/>
<dbReference type="PDBsum" id="3NVY"/>
<dbReference type="PDBsum" id="3NVZ"/>
<dbReference type="PDBsum" id="3SR6"/>
<dbReference type="PDBsum" id="3UNA"/>
<dbReference type="PDBsum" id="3UNC"/>
<dbReference type="PDBsum" id="3UNI"/>
<dbReference type="PDBsum" id="8J79"/>
<dbReference type="SMR" id="P80457"/>
<dbReference type="FunCoup" id="P80457">
    <property type="interactions" value="620"/>
</dbReference>
<dbReference type="IntAct" id="P80457">
    <property type="interactions" value="1"/>
</dbReference>
<dbReference type="STRING" id="9913.ENSBTAP00000061483"/>
<dbReference type="BindingDB" id="P80457"/>
<dbReference type="ChEMBL" id="CHEMBL3649"/>
<dbReference type="DrugCentral" id="P80457"/>
<dbReference type="PaxDb" id="9913-ENSBTAP00000016620"/>
<dbReference type="PeptideAtlas" id="P80457"/>
<dbReference type="GeneID" id="280960"/>
<dbReference type="KEGG" id="bta:280960"/>
<dbReference type="CTD" id="7498"/>
<dbReference type="eggNOG" id="KOG0430">
    <property type="taxonomic scope" value="Eukaryota"/>
</dbReference>
<dbReference type="InParanoid" id="P80457"/>
<dbReference type="OrthoDB" id="8300278at2759"/>
<dbReference type="BRENDA" id="1.17.1.4">
    <property type="organism ID" value="908"/>
</dbReference>
<dbReference type="BRENDA" id="1.17.3.2">
    <property type="organism ID" value="908"/>
</dbReference>
<dbReference type="SABIO-RK" id="P80457"/>
<dbReference type="EvolutionaryTrace" id="P80457"/>
<dbReference type="PRO" id="PR:P80457"/>
<dbReference type="Proteomes" id="UP000009136">
    <property type="component" value="Unplaced"/>
</dbReference>
<dbReference type="GO" id="GO:0005615">
    <property type="term" value="C:extracellular space"/>
    <property type="evidence" value="ECO:0000314"/>
    <property type="project" value="CAFA"/>
</dbReference>
<dbReference type="GO" id="GO:0005777">
    <property type="term" value="C:peroxisome"/>
    <property type="evidence" value="ECO:0007669"/>
    <property type="project" value="UniProtKB-SubCell"/>
</dbReference>
<dbReference type="GO" id="GO:0002197">
    <property type="term" value="C:xanthine dehydrogenase complex"/>
    <property type="evidence" value="ECO:0000314"/>
    <property type="project" value="CAFA"/>
</dbReference>
<dbReference type="GO" id="GO:0051537">
    <property type="term" value="F:2 iron, 2 sulfur cluster binding"/>
    <property type="evidence" value="ECO:0000314"/>
    <property type="project" value="CAFA"/>
</dbReference>
<dbReference type="GO" id="GO:0071949">
    <property type="term" value="F:FAD binding"/>
    <property type="evidence" value="ECO:0000314"/>
    <property type="project" value="CAFA"/>
</dbReference>
<dbReference type="GO" id="GO:0050660">
    <property type="term" value="F:flavin adenine dinucleotide binding"/>
    <property type="evidence" value="ECO:0000250"/>
    <property type="project" value="UniProtKB"/>
</dbReference>
<dbReference type="GO" id="GO:0005506">
    <property type="term" value="F:iron ion binding"/>
    <property type="evidence" value="ECO:0007669"/>
    <property type="project" value="InterPro"/>
</dbReference>
<dbReference type="GO" id="GO:0030151">
    <property type="term" value="F:molybdenum ion binding"/>
    <property type="evidence" value="ECO:0000314"/>
    <property type="project" value="CAFA"/>
</dbReference>
<dbReference type="GO" id="GO:0043546">
    <property type="term" value="F:molybdopterin cofactor binding"/>
    <property type="evidence" value="ECO:0000314"/>
    <property type="project" value="CAFA"/>
</dbReference>
<dbReference type="GO" id="GO:0042803">
    <property type="term" value="F:protein homodimerization activity"/>
    <property type="evidence" value="ECO:0000314"/>
    <property type="project" value="CAFA"/>
</dbReference>
<dbReference type="GO" id="GO:0004854">
    <property type="term" value="F:xanthine dehydrogenase activity"/>
    <property type="evidence" value="ECO:0000250"/>
    <property type="project" value="UniProtKB"/>
</dbReference>
<dbReference type="GO" id="GO:0004855">
    <property type="term" value="F:xanthine oxidase activity"/>
    <property type="evidence" value="ECO:0000250"/>
    <property type="project" value="UniProtKB"/>
</dbReference>
<dbReference type="GO" id="GO:0009115">
    <property type="term" value="P:xanthine catabolic process"/>
    <property type="evidence" value="ECO:0000250"/>
    <property type="project" value="UniProtKB"/>
</dbReference>
<dbReference type="DisProt" id="DP00450"/>
<dbReference type="FunFam" id="3.10.20.30:FF:000015">
    <property type="entry name" value="Aldehyde oxidase 1"/>
    <property type="match status" value="1"/>
</dbReference>
<dbReference type="FunFam" id="3.30.365.10:FF:000003">
    <property type="entry name" value="Aldehyde oxidase 1"/>
    <property type="match status" value="1"/>
</dbReference>
<dbReference type="FunFam" id="3.30.365.10:FF:000001">
    <property type="entry name" value="Xanthine dehydrogenase oxidase"/>
    <property type="match status" value="1"/>
</dbReference>
<dbReference type="FunFam" id="3.30.365.10:FF:000004">
    <property type="entry name" value="Xanthine dehydrogenase oxidase"/>
    <property type="match status" value="1"/>
</dbReference>
<dbReference type="FunFam" id="3.30.390.50:FF:000001">
    <property type="entry name" value="Xanthine dehydrogenase oxidase"/>
    <property type="match status" value="1"/>
</dbReference>
<dbReference type="FunFam" id="3.30.43.10:FF:000001">
    <property type="entry name" value="Xanthine dehydrogenase/oxidase"/>
    <property type="match status" value="1"/>
</dbReference>
<dbReference type="FunFam" id="3.30.465.10:FF:000004">
    <property type="entry name" value="Xanthine dehydrogenase/oxidase"/>
    <property type="match status" value="1"/>
</dbReference>
<dbReference type="FunFam" id="3.90.1170.50:FF:000002">
    <property type="entry name" value="Xanthine dehydrogenase/oxidase"/>
    <property type="match status" value="1"/>
</dbReference>
<dbReference type="FunFam" id="1.10.150.120:FF:000002">
    <property type="entry name" value="xanthine dehydrogenase/oxidase"/>
    <property type="match status" value="1"/>
</dbReference>
<dbReference type="FunFam" id="3.30.365.10:FF:000006">
    <property type="entry name" value="xanthine dehydrogenase/oxidase"/>
    <property type="match status" value="1"/>
</dbReference>
<dbReference type="Gene3D" id="3.10.20.30">
    <property type="match status" value="1"/>
</dbReference>
<dbReference type="Gene3D" id="3.30.465.10">
    <property type="match status" value="1"/>
</dbReference>
<dbReference type="Gene3D" id="1.10.150.120">
    <property type="entry name" value="[2Fe-2S]-binding domain"/>
    <property type="match status" value="1"/>
</dbReference>
<dbReference type="Gene3D" id="3.90.1170.50">
    <property type="entry name" value="Aldehyde oxidase/xanthine dehydrogenase, a/b hammerhead"/>
    <property type="match status" value="1"/>
</dbReference>
<dbReference type="Gene3D" id="3.30.365.10">
    <property type="entry name" value="Aldehyde oxidase/xanthine dehydrogenase, molybdopterin binding domain"/>
    <property type="match status" value="5"/>
</dbReference>
<dbReference type="Gene3D" id="3.30.390.50">
    <property type="entry name" value="CO dehydrogenase flavoprotein, C-terminal domain"/>
    <property type="match status" value="1"/>
</dbReference>
<dbReference type="Gene3D" id="3.30.43.10">
    <property type="entry name" value="Uridine Diphospho-n-acetylenolpyruvylglucosamine Reductase, domain 2"/>
    <property type="match status" value="1"/>
</dbReference>
<dbReference type="InterPro" id="IPR002888">
    <property type="entry name" value="2Fe-2S-bd"/>
</dbReference>
<dbReference type="InterPro" id="IPR036884">
    <property type="entry name" value="2Fe-2S-bd_dom_sf"/>
</dbReference>
<dbReference type="InterPro" id="IPR036010">
    <property type="entry name" value="2Fe-2S_ferredoxin-like_sf"/>
</dbReference>
<dbReference type="InterPro" id="IPR001041">
    <property type="entry name" value="2Fe-2S_ferredoxin-type"/>
</dbReference>
<dbReference type="InterPro" id="IPR006058">
    <property type="entry name" value="2Fe2S_fd_BS"/>
</dbReference>
<dbReference type="InterPro" id="IPR000674">
    <property type="entry name" value="Ald_Oxase/Xan_DH_a/b"/>
</dbReference>
<dbReference type="InterPro" id="IPR036856">
    <property type="entry name" value="Ald_Oxase/Xan_DH_a/b_sf"/>
</dbReference>
<dbReference type="InterPro" id="IPR016208">
    <property type="entry name" value="Ald_Oxase/xanthine_DH-like"/>
</dbReference>
<dbReference type="InterPro" id="IPR008274">
    <property type="entry name" value="AldOxase/xan_DH_MoCoBD1"/>
</dbReference>
<dbReference type="InterPro" id="IPR046867">
    <property type="entry name" value="AldOxase/xan_DH_MoCoBD2"/>
</dbReference>
<dbReference type="InterPro" id="IPR037165">
    <property type="entry name" value="AldOxase/xan_DH_Mopterin-bd_sf"/>
</dbReference>
<dbReference type="InterPro" id="IPR012675">
    <property type="entry name" value="Beta-grasp_dom_sf"/>
</dbReference>
<dbReference type="InterPro" id="IPR005107">
    <property type="entry name" value="CO_DH_flav_C"/>
</dbReference>
<dbReference type="InterPro" id="IPR036683">
    <property type="entry name" value="CO_DH_flav_C_dom_sf"/>
</dbReference>
<dbReference type="InterPro" id="IPR016166">
    <property type="entry name" value="FAD-bd_PCMH"/>
</dbReference>
<dbReference type="InterPro" id="IPR036318">
    <property type="entry name" value="FAD-bd_PCMH-like_sf"/>
</dbReference>
<dbReference type="InterPro" id="IPR016167">
    <property type="entry name" value="FAD-bd_PCMH_sub1"/>
</dbReference>
<dbReference type="InterPro" id="IPR016169">
    <property type="entry name" value="FAD-bd_PCMH_sub2"/>
</dbReference>
<dbReference type="InterPro" id="IPR002346">
    <property type="entry name" value="Mopterin_DH_FAD-bd"/>
</dbReference>
<dbReference type="InterPro" id="IPR022407">
    <property type="entry name" value="OxRdtase_Mopterin_BS"/>
</dbReference>
<dbReference type="InterPro" id="IPR014307">
    <property type="entry name" value="Xanthine_DH_ssu"/>
</dbReference>
<dbReference type="NCBIfam" id="TIGR02963">
    <property type="entry name" value="xanthine_xdhA"/>
    <property type="match status" value="1"/>
</dbReference>
<dbReference type="PANTHER" id="PTHR45444">
    <property type="entry name" value="XANTHINE DEHYDROGENASE"/>
    <property type="match status" value="1"/>
</dbReference>
<dbReference type="PANTHER" id="PTHR45444:SF3">
    <property type="entry name" value="XANTHINE DEHYDROGENASE"/>
    <property type="match status" value="1"/>
</dbReference>
<dbReference type="Pfam" id="PF01315">
    <property type="entry name" value="Ald_Xan_dh_C"/>
    <property type="match status" value="1"/>
</dbReference>
<dbReference type="Pfam" id="PF03450">
    <property type="entry name" value="CO_deh_flav_C"/>
    <property type="match status" value="1"/>
</dbReference>
<dbReference type="Pfam" id="PF00941">
    <property type="entry name" value="FAD_binding_5"/>
    <property type="match status" value="1"/>
</dbReference>
<dbReference type="Pfam" id="PF00111">
    <property type="entry name" value="Fer2"/>
    <property type="match status" value="1"/>
</dbReference>
<dbReference type="Pfam" id="PF01799">
    <property type="entry name" value="Fer2_2"/>
    <property type="match status" value="1"/>
</dbReference>
<dbReference type="Pfam" id="PF02738">
    <property type="entry name" value="MoCoBD_1"/>
    <property type="match status" value="1"/>
</dbReference>
<dbReference type="Pfam" id="PF20256">
    <property type="entry name" value="MoCoBD_2"/>
    <property type="match status" value="1"/>
</dbReference>
<dbReference type="PIRSF" id="PIRSF000127">
    <property type="entry name" value="Xanthine_DH"/>
    <property type="match status" value="1"/>
</dbReference>
<dbReference type="SMART" id="SM01008">
    <property type="entry name" value="Ald_Xan_dh_C"/>
    <property type="match status" value="1"/>
</dbReference>
<dbReference type="SMART" id="SM01092">
    <property type="entry name" value="CO_deh_flav_C"/>
    <property type="match status" value="1"/>
</dbReference>
<dbReference type="SUPFAM" id="SSF54292">
    <property type="entry name" value="2Fe-2S ferredoxin-like"/>
    <property type="match status" value="1"/>
</dbReference>
<dbReference type="SUPFAM" id="SSF55447">
    <property type="entry name" value="CO dehydrogenase flavoprotein C-terminal domain-like"/>
    <property type="match status" value="1"/>
</dbReference>
<dbReference type="SUPFAM" id="SSF47741">
    <property type="entry name" value="CO dehydrogenase ISP C-domain like"/>
    <property type="match status" value="1"/>
</dbReference>
<dbReference type="SUPFAM" id="SSF54665">
    <property type="entry name" value="CO dehydrogenase molybdoprotein N-domain-like"/>
    <property type="match status" value="1"/>
</dbReference>
<dbReference type="SUPFAM" id="SSF56176">
    <property type="entry name" value="FAD-binding/transporter-associated domain-like"/>
    <property type="match status" value="1"/>
</dbReference>
<dbReference type="SUPFAM" id="SSF56003">
    <property type="entry name" value="Molybdenum cofactor-binding domain"/>
    <property type="match status" value="1"/>
</dbReference>
<dbReference type="PROSITE" id="PS00197">
    <property type="entry name" value="2FE2S_FER_1"/>
    <property type="match status" value="1"/>
</dbReference>
<dbReference type="PROSITE" id="PS51085">
    <property type="entry name" value="2FE2S_FER_2"/>
    <property type="match status" value="1"/>
</dbReference>
<dbReference type="PROSITE" id="PS51387">
    <property type="entry name" value="FAD_PCMH"/>
    <property type="match status" value="1"/>
</dbReference>
<dbReference type="PROSITE" id="PS00559">
    <property type="entry name" value="MOLYBDOPTERIN_EUK"/>
    <property type="match status" value="1"/>
</dbReference>
<accession>P80457</accession>
<accession>Q95325</accession>
<keyword id="KW-0001">2Fe-2S</keyword>
<keyword id="KW-0002">3D-structure</keyword>
<keyword id="KW-0963">Cytoplasm</keyword>
<keyword id="KW-0903">Direct protein sequencing</keyword>
<keyword id="KW-1015">Disulfide bond</keyword>
<keyword id="KW-0274">FAD</keyword>
<keyword id="KW-0285">Flavoprotein</keyword>
<keyword id="KW-0408">Iron</keyword>
<keyword id="KW-0411">Iron-sulfur</keyword>
<keyword id="KW-0479">Metal-binding</keyword>
<keyword id="KW-0500">Molybdenum</keyword>
<keyword id="KW-0520">NAD</keyword>
<keyword id="KW-0560">Oxidoreductase</keyword>
<keyword id="KW-0576">Peroxisome</keyword>
<keyword id="KW-1185">Reference proteome</keyword>
<keyword id="KW-0964">Secreted</keyword>
<protein>
    <recommendedName>
        <fullName>Xanthine dehydrogenase/oxidase</fullName>
    </recommendedName>
    <domain>
        <recommendedName>
            <fullName>Xanthine dehydrogenase</fullName>
            <shortName>XD</shortName>
            <ecNumber evidence="5 6 8 10">1.17.1.4</ecNumber>
        </recommendedName>
    </domain>
    <domain>
        <recommendedName>
            <fullName>Xanthine oxidase</fullName>
            <shortName>XO</shortName>
            <ecNumber evidence="5 6 8 10">1.17.3.2</ecNumber>
        </recommendedName>
        <alternativeName>
            <fullName>Xanthine oxidoreductase</fullName>
            <shortName>XOR</shortName>
        </alternativeName>
    </domain>
</protein>
<proteinExistence type="evidence at protein level"/>
<sequence length="1332" mass="146790">MTADELVFFVNGKKVVEKNADPETTLLAYLRRKLGLRGTKLGCGEGGCGACTVMLSKYDRLQDKIIHFSANACLAPICTLHHVAVTTVEGIGSTKTRLHPVQERIAKSHGSQCGFCTPGIVMSMYTLLRNQPEPTVEEIEDAFQGNLCRCTGYRPILQGFRTFAKNGGCCGGNGNNPNCCMNQKKDHTVTLSPSLFNPEEFMPLDPTQEPIFPPELLRLKDVPPKQLRFEGERVTWIQASTLKELLDLKAQHPEAKLVVGNTEIGIEMKFKNQLFPMIICPAWIPELNAVEHGPEGISFGAACALSSVEKTLLEAVAKLPTQKTEVFRGVLEQLRWFAGKQVKSVASLGGNIITASPISDLNPVFMASGTKLTIVSRGTRRTVPMDHTFFPSYRKTLLGPEEILLSIEIPYSREDEFFSAFKQASRREDDIAKVTCGMRVLFQPGSMQVKELALCYGGMADRTISALKTTQKQLSKFWNEKLLQDVCAGLAEELSLSPDAPGGMIEFRRTLTLSFFFKFYLTVLKKLGKDSKDKCGKLDPTYTSATLLFQKDPPANIQLFQEVPNGQSKEDTVGRPLPHLAAAMQASGEAVYCDDIPRYENELFLRLVTSTRAHAKIKSIDVSEAQKVPGFVCFLSADDIPGSNETGLFNDETVFAKDTVTCVGHIIGAVVADTPEHAERAAHVVKVTYEDLPAIITIEDAIKNNSFYGSELKIEKGDLKKGFSEADNVVSGELYIGGQDHFYLETHCTIAIPKGEEGEMELFVSTQNAMKTQSFVAKMLGVPVNRILVRVKRMGGGFGGKETRSTLVSVAVALAAYKTGHPVRCMLDRNEDMLITGGRHPFLARYKVGFMKTGTIVALEVDHYSNAGNSRDLSHSIMERALFHMDNCYKIPNIRGTGRLCKTNLSSNTAFRGFGGPQALFIAENWMSEVAVTCGLPAEEVRWKNMYKEGDLTHFNQRLEGFSVPRCWDECLKSSQYYARKSEVDKFNKENCWKKRGLCIIPTKFGISFTVPFLNQAGALIHVYTDGSVLVSHGGTEMGQGLHTKMVQVASKALKIPISKIYISETSTNTVPNSSPTAASVSTDIYGQAVYEACQTILKRLEPFKKKNPDGSWEDWVMAAYQDRVSLSTTGFYRTPNLGYSFETNSGNAFHYFTYGVACSEVEIDCLTGDHKNLRTDIVMDVGSSLNPAIDIGQVEGAFVQGLGLFTLEELHYSPEGSLHTRGPSTYKIPAFGSIPTEFRVSLLRDCPNKKAIYASKAVGEPPLFLGASVFFAIKDAIRAARAQHTNNNTKELFRLDSPATPEKIRNACVDKFTTLCVTGAPGNCKPWSLRV</sequence>
<comment type="function">
    <text evidence="2">Key enzyme in purine degradation. Catalyzes the oxidation of hypoxanthine to xanthine. Catalyzes the oxidation of xanthine to uric acid. Contributes to the generation of reactive oxygen species.</text>
</comment>
<comment type="catalytic activity">
    <reaction evidence="5 6 8 10">
        <text>xanthine + NAD(+) + H2O = urate + NADH + H(+)</text>
        <dbReference type="Rhea" id="RHEA:16669"/>
        <dbReference type="ChEBI" id="CHEBI:15377"/>
        <dbReference type="ChEBI" id="CHEBI:15378"/>
        <dbReference type="ChEBI" id="CHEBI:17712"/>
        <dbReference type="ChEBI" id="CHEBI:17775"/>
        <dbReference type="ChEBI" id="CHEBI:57540"/>
        <dbReference type="ChEBI" id="CHEBI:57945"/>
        <dbReference type="EC" id="1.17.1.4"/>
    </reaction>
</comment>
<comment type="catalytic activity">
    <reaction evidence="5 6 8 10">
        <text>hypoxanthine + NAD(+) + H2O = xanthine + NADH + H(+)</text>
        <dbReference type="Rhea" id="RHEA:24670"/>
        <dbReference type="ChEBI" id="CHEBI:15377"/>
        <dbReference type="ChEBI" id="CHEBI:15378"/>
        <dbReference type="ChEBI" id="CHEBI:17368"/>
        <dbReference type="ChEBI" id="CHEBI:17712"/>
        <dbReference type="ChEBI" id="CHEBI:57540"/>
        <dbReference type="ChEBI" id="CHEBI:57945"/>
        <dbReference type="EC" id="1.17.1.4"/>
    </reaction>
</comment>
<comment type="catalytic activity">
    <reaction evidence="5 6 8 10">
        <text>xanthine + O2 + H2O = urate + H2O2</text>
        <dbReference type="Rhea" id="RHEA:21132"/>
        <dbReference type="ChEBI" id="CHEBI:15377"/>
        <dbReference type="ChEBI" id="CHEBI:15379"/>
        <dbReference type="ChEBI" id="CHEBI:16240"/>
        <dbReference type="ChEBI" id="CHEBI:17712"/>
        <dbReference type="ChEBI" id="CHEBI:17775"/>
        <dbReference type="EC" id="1.17.3.2"/>
    </reaction>
</comment>
<comment type="cofactor">
    <cofactor evidence="6 8 9">
        <name>[2Fe-2S] cluster</name>
        <dbReference type="ChEBI" id="CHEBI:190135"/>
    </cofactor>
    <text evidence="6 8 9">Binds 2 [2Fe-2S] clusters per subunit.</text>
</comment>
<comment type="cofactor">
    <cofactor evidence="6 8 9">
        <name>FAD</name>
        <dbReference type="ChEBI" id="CHEBI:57692"/>
    </cofactor>
</comment>
<comment type="cofactor">
    <cofactor evidence="6 8 9">
        <name>Mo-molybdopterin</name>
        <dbReference type="ChEBI" id="CHEBI:71302"/>
    </cofactor>
    <text evidence="6 8 9">Binds 1 Mo-molybdopterin (Mo-MPT) cofactor per subunit.</text>
</comment>
<comment type="activity regulation">
    <text evidence="5 7 10">Can be converted from the dehydrogenase form (D) to the oxidase form (O) irreversibly by proteolysis or reversibly through the oxidation of sulfhydryl groups.</text>
</comment>
<comment type="biophysicochemical properties">
    <kinetics>
        <KM evidence="7 10">111 uM for molecular oxygen in dehydrogenase form</KM>
        <KM evidence="7 10">37.7 uM for molecular oxygen in oxygenase form</KM>
        <KM evidence="7 10">20.8 uM for NAD</KM>
        <KM evidence="7 10">5 uM for xanthine</KM>
    </kinetics>
</comment>
<comment type="subunit">
    <text evidence="1">Homodimer. Interacts with BTN1A1 (By similarity).</text>
</comment>
<comment type="subcellular location">
    <subcellularLocation>
        <location evidence="1">Cytoplasm</location>
    </subcellularLocation>
    <subcellularLocation>
        <location>Peroxisome</location>
    </subcellularLocation>
    <subcellularLocation>
        <location>Secreted</location>
    </subcellularLocation>
</comment>
<comment type="tissue specificity">
    <text evidence="5 6 8">Detected in milk (at protein level).</text>
</comment>
<comment type="PTM">
    <text>Subject to partial proteolysis; this alters the enzyme from the dehydrogenase form (D) to the oxidase form (O).</text>
</comment>
<comment type="PTM">
    <text>Contains sulfhydryl groups that are easily oxidized (in vitro); this alters the enzyme from the dehydrogenase form (D) to the oxidase form (O).</text>
</comment>
<comment type="similarity">
    <text evidence="12">Belongs to the xanthine dehydrogenase family.</text>
</comment>
<name>XDH_BOVIN</name>
<evidence type="ECO:0000250" key="1"/>
<evidence type="ECO:0000250" key="2">
    <source>
        <dbReference type="UniProtKB" id="P22985"/>
    </source>
</evidence>
<evidence type="ECO:0000255" key="3">
    <source>
        <dbReference type="PROSITE-ProRule" id="PRU00465"/>
    </source>
</evidence>
<evidence type="ECO:0000255" key="4">
    <source>
        <dbReference type="PROSITE-ProRule" id="PRU00718"/>
    </source>
</evidence>
<evidence type="ECO:0000269" key="5">
    <source>
    </source>
</evidence>
<evidence type="ECO:0000269" key="6">
    <source>
    </source>
</evidence>
<evidence type="ECO:0000269" key="7">
    <source>
    </source>
</evidence>
<evidence type="ECO:0000269" key="8">
    <source>
    </source>
</evidence>
<evidence type="ECO:0000269" key="9">
    <source>
    </source>
</evidence>
<evidence type="ECO:0000269" key="10">
    <source>
    </source>
</evidence>
<evidence type="ECO:0000269" key="11">
    <source>
    </source>
</evidence>
<evidence type="ECO:0000305" key="12"/>
<evidence type="ECO:0007829" key="13">
    <source>
        <dbReference type="PDB" id="1FO4"/>
    </source>
</evidence>
<evidence type="ECO:0007829" key="14">
    <source>
        <dbReference type="PDB" id="1V97"/>
    </source>
</evidence>
<evidence type="ECO:0007829" key="15">
    <source>
        <dbReference type="PDB" id="3B9J"/>
    </source>
</evidence>
<evidence type="ECO:0007829" key="16">
    <source>
        <dbReference type="PDB" id="3EUB"/>
    </source>
</evidence>
<evidence type="ECO:0007829" key="17">
    <source>
        <dbReference type="PDB" id="3NVW"/>
    </source>
</evidence>
<evidence type="ECO:0007829" key="18">
    <source>
        <dbReference type="PDB" id="3NVZ"/>
    </source>
</evidence>
<evidence type="ECO:0007829" key="19">
    <source>
        <dbReference type="PDB" id="3SR6"/>
    </source>
</evidence>
<evidence type="ECO:0007829" key="20">
    <source>
        <dbReference type="PDB" id="3UNC"/>
    </source>
</evidence>
<organism>
    <name type="scientific">Bos taurus</name>
    <name type="common">Bovine</name>
    <dbReference type="NCBI Taxonomy" id="9913"/>
    <lineage>
        <taxon>Eukaryota</taxon>
        <taxon>Metazoa</taxon>
        <taxon>Chordata</taxon>
        <taxon>Craniata</taxon>
        <taxon>Vertebrata</taxon>
        <taxon>Euteleostomi</taxon>
        <taxon>Mammalia</taxon>
        <taxon>Eutheria</taxon>
        <taxon>Laurasiatheria</taxon>
        <taxon>Artiodactyla</taxon>
        <taxon>Ruminantia</taxon>
        <taxon>Pecora</taxon>
        <taxon>Bovidae</taxon>
        <taxon>Bovinae</taxon>
        <taxon>Bos</taxon>
    </lineage>
</organism>
<gene>
    <name type="primary">XDH</name>
</gene>